<sequence>MNALEEILDGVRADLAVRERETSLAALKQRVERVPDPRDALAVLRAPRVSVIAEIKRRSPSRGALATIADPAALASLYEQAGAAAVSVLTEQRRFGGSLADLDAVRVAVDIPVLRKDFVISPYQVLEARAHGADMVLLIVAALDQPRLIGLLERVESLGMTALVEVHDETEMLRALDAGARLVGVNARNLRTLEVDRETFARLAPMVPQGVLKVAESGVRGPRDLLQYAGAGADAVLVGEAAVTGGDPRQFVADLVTAGTHPATRIAH</sequence>
<accession>A8LGR8</accession>
<feature type="chain" id="PRO_1000095868" description="Indole-3-glycerol phosphate synthase">
    <location>
        <begin position="1"/>
        <end position="268"/>
    </location>
</feature>
<evidence type="ECO:0000255" key="1">
    <source>
        <dbReference type="HAMAP-Rule" id="MF_00134"/>
    </source>
</evidence>
<keyword id="KW-0028">Amino-acid biosynthesis</keyword>
<keyword id="KW-0057">Aromatic amino acid biosynthesis</keyword>
<keyword id="KW-0210">Decarboxylase</keyword>
<keyword id="KW-0456">Lyase</keyword>
<keyword id="KW-0822">Tryptophan biosynthesis</keyword>
<comment type="catalytic activity">
    <reaction evidence="1">
        <text>1-(2-carboxyphenylamino)-1-deoxy-D-ribulose 5-phosphate + H(+) = (1S,2R)-1-C-(indol-3-yl)glycerol 3-phosphate + CO2 + H2O</text>
        <dbReference type="Rhea" id="RHEA:23476"/>
        <dbReference type="ChEBI" id="CHEBI:15377"/>
        <dbReference type="ChEBI" id="CHEBI:15378"/>
        <dbReference type="ChEBI" id="CHEBI:16526"/>
        <dbReference type="ChEBI" id="CHEBI:58613"/>
        <dbReference type="ChEBI" id="CHEBI:58866"/>
        <dbReference type="EC" id="4.1.1.48"/>
    </reaction>
</comment>
<comment type="pathway">
    <text evidence="1">Amino-acid biosynthesis; L-tryptophan biosynthesis; L-tryptophan from chorismate: step 4/5.</text>
</comment>
<comment type="similarity">
    <text evidence="1">Belongs to the TrpC family.</text>
</comment>
<dbReference type="EC" id="4.1.1.48" evidence="1"/>
<dbReference type="EMBL" id="CP000820">
    <property type="protein sequence ID" value="ABW11368.1"/>
    <property type="molecule type" value="Genomic_DNA"/>
</dbReference>
<dbReference type="RefSeq" id="WP_020459536.1">
    <property type="nucleotide sequence ID" value="NC_009921.1"/>
</dbReference>
<dbReference type="SMR" id="A8LGR8"/>
<dbReference type="STRING" id="298653.Franean1_1931"/>
<dbReference type="KEGG" id="fre:Franean1_1931"/>
<dbReference type="eggNOG" id="COG0134">
    <property type="taxonomic scope" value="Bacteria"/>
</dbReference>
<dbReference type="HOGENOM" id="CLU_034247_2_0_11"/>
<dbReference type="UniPathway" id="UPA00035">
    <property type="reaction ID" value="UER00043"/>
</dbReference>
<dbReference type="GO" id="GO:0004425">
    <property type="term" value="F:indole-3-glycerol-phosphate synthase activity"/>
    <property type="evidence" value="ECO:0007669"/>
    <property type="project" value="UniProtKB-UniRule"/>
</dbReference>
<dbReference type="GO" id="GO:0004640">
    <property type="term" value="F:phosphoribosylanthranilate isomerase activity"/>
    <property type="evidence" value="ECO:0007669"/>
    <property type="project" value="TreeGrafter"/>
</dbReference>
<dbReference type="GO" id="GO:0000162">
    <property type="term" value="P:L-tryptophan biosynthetic process"/>
    <property type="evidence" value="ECO:0007669"/>
    <property type="project" value="UniProtKB-UniRule"/>
</dbReference>
<dbReference type="CDD" id="cd00331">
    <property type="entry name" value="IGPS"/>
    <property type="match status" value="1"/>
</dbReference>
<dbReference type="FunFam" id="3.20.20.70:FF:000024">
    <property type="entry name" value="Indole-3-glycerol phosphate synthase"/>
    <property type="match status" value="1"/>
</dbReference>
<dbReference type="Gene3D" id="3.20.20.70">
    <property type="entry name" value="Aldolase class I"/>
    <property type="match status" value="1"/>
</dbReference>
<dbReference type="HAMAP" id="MF_00134_A">
    <property type="entry name" value="IGPS_A"/>
    <property type="match status" value="1"/>
</dbReference>
<dbReference type="HAMAP" id="MF_00134_B">
    <property type="entry name" value="IGPS_B"/>
    <property type="match status" value="1"/>
</dbReference>
<dbReference type="InterPro" id="IPR013785">
    <property type="entry name" value="Aldolase_TIM"/>
</dbReference>
<dbReference type="InterPro" id="IPR045186">
    <property type="entry name" value="Indole-3-glycerol_P_synth"/>
</dbReference>
<dbReference type="InterPro" id="IPR013798">
    <property type="entry name" value="Indole-3-glycerol_P_synth_dom"/>
</dbReference>
<dbReference type="InterPro" id="IPR001468">
    <property type="entry name" value="Indole-3-GlycerolPSynthase_CS"/>
</dbReference>
<dbReference type="InterPro" id="IPR011060">
    <property type="entry name" value="RibuloseP-bd_barrel"/>
</dbReference>
<dbReference type="NCBIfam" id="NF001369">
    <property type="entry name" value="PRK00278.1-1"/>
    <property type="match status" value="1"/>
</dbReference>
<dbReference type="NCBIfam" id="NF001377">
    <property type="entry name" value="PRK00278.2-4"/>
    <property type="match status" value="1"/>
</dbReference>
<dbReference type="PANTHER" id="PTHR22854:SF2">
    <property type="entry name" value="INDOLE-3-GLYCEROL-PHOSPHATE SYNTHASE"/>
    <property type="match status" value="1"/>
</dbReference>
<dbReference type="PANTHER" id="PTHR22854">
    <property type="entry name" value="TRYPTOPHAN BIOSYNTHESIS PROTEIN"/>
    <property type="match status" value="1"/>
</dbReference>
<dbReference type="Pfam" id="PF00218">
    <property type="entry name" value="IGPS"/>
    <property type="match status" value="1"/>
</dbReference>
<dbReference type="SUPFAM" id="SSF51366">
    <property type="entry name" value="Ribulose-phoshate binding barrel"/>
    <property type="match status" value="1"/>
</dbReference>
<dbReference type="PROSITE" id="PS00614">
    <property type="entry name" value="IGPS"/>
    <property type="match status" value="1"/>
</dbReference>
<reference key="1">
    <citation type="journal article" date="2007" name="Genome Res.">
        <title>Genome characteristics of facultatively symbiotic Frankia sp. strains reflect host range and host plant biogeography.</title>
        <authorList>
            <person name="Normand P."/>
            <person name="Lapierre P."/>
            <person name="Tisa L.S."/>
            <person name="Gogarten J.P."/>
            <person name="Alloisio N."/>
            <person name="Bagnarol E."/>
            <person name="Bassi C.A."/>
            <person name="Berry A.M."/>
            <person name="Bickhart D.M."/>
            <person name="Choisne N."/>
            <person name="Couloux A."/>
            <person name="Cournoyer B."/>
            <person name="Cruveiller S."/>
            <person name="Daubin V."/>
            <person name="Demange N."/>
            <person name="Francino M.P."/>
            <person name="Goltsman E."/>
            <person name="Huang Y."/>
            <person name="Kopp O.R."/>
            <person name="Labarre L."/>
            <person name="Lapidus A."/>
            <person name="Lavire C."/>
            <person name="Marechal J."/>
            <person name="Martinez M."/>
            <person name="Mastronunzio J.E."/>
            <person name="Mullin B.C."/>
            <person name="Niemann J."/>
            <person name="Pujic P."/>
            <person name="Rawnsley T."/>
            <person name="Rouy Z."/>
            <person name="Schenowitz C."/>
            <person name="Sellstedt A."/>
            <person name="Tavares F."/>
            <person name="Tomkins J.P."/>
            <person name="Vallenet D."/>
            <person name="Valverde C."/>
            <person name="Wall L.G."/>
            <person name="Wang Y."/>
            <person name="Medigue C."/>
            <person name="Benson D.R."/>
        </authorList>
    </citation>
    <scope>NUCLEOTIDE SEQUENCE [LARGE SCALE GENOMIC DNA]</scope>
    <source>
        <strain>EAN1pec</strain>
    </source>
</reference>
<name>TRPC_PARS2</name>
<proteinExistence type="inferred from homology"/>
<gene>
    <name evidence="1" type="primary">trpC</name>
    <name type="ordered locus">Franean1_1931</name>
</gene>
<organism>
    <name type="scientific">Parafrankia sp. (strain EAN1pec)</name>
    <dbReference type="NCBI Taxonomy" id="298653"/>
    <lineage>
        <taxon>Bacteria</taxon>
        <taxon>Bacillati</taxon>
        <taxon>Actinomycetota</taxon>
        <taxon>Actinomycetes</taxon>
        <taxon>Frankiales</taxon>
        <taxon>Frankiaceae</taxon>
        <taxon>Parafrankia</taxon>
    </lineage>
</organism>
<protein>
    <recommendedName>
        <fullName evidence="1">Indole-3-glycerol phosphate synthase</fullName>
        <shortName evidence="1">IGPS</shortName>
        <ecNumber evidence="1">4.1.1.48</ecNumber>
    </recommendedName>
</protein>